<sequence length="1770" mass="202039">MESQQLHQNPHSLHGSAYASVTSKEVPSNQDPLAVSASNLPEFDRDSTKVNSQQETTPGTSAVPENHHHVSPQPASVPPPQNGQYQQHGMMTPNKAMASNWAHYQQPSMMTCSHYQTSPAYYQPDPHYPLPQYIPPLSTSSPDPIDSQNQHSEVPQAETKVRNNVLPPHTLTSEENFSTWVKFYIRFLKNSNLGDIIPNDQGEIKSQMTYEEHAYIYNTFQAFAPFHLLPTWVKQILEINYADILTVLCKSVSKMQTNNQELKDWIALANLEYDGSTSADTFEITVSTIIQRLKENNINVSDRLACQLILKGLSGDFKYLRNQYRTKTNMKLSQLFAEIQLIYDENKIMNLNKPSQYKQHSEYKNVSRTSPNTTNTKVTTRNYHRTNSSKPRAAKAHNIATSSKFSRVNNDHINESTVSSQYLSDDNELSLGQQQKESKPTHTIDSNDELPDHLLIDSGASQTLVRSAHYLHHATPNSEINIVDAQKQDIPINAIGNLHFNFQNGTKTSIKALHTPNIAYDLLSLSELANQNITACFTRNTLERSDGTVLAPIVKHGDFYWLSKKYLIPSHISKLTINNVNKSKSVNKYPYPLIHRMLGHANFRSIQKSLKKNAVTYLKESDIEWSNASTYQCPDCLIGKSTKHRHVKGSRLKYQESYEPFQYLHTDIFGPVHHLPKSAPSYFISFTDEKTRFQWVYPLHDRREESILNVFTSILAFIKNQFNARVLVIQMDRGSEYTNKTLHKFFTNRGITACYTTTADSRAHGVAERLNRTLLNDCRTLLHCSGLPNHLWFSAVEFSTIIRNSLVSPKNDKSARQHAGLAGLDITTILPFGQPVIVNNHNPDSKIHPRGIPGYALHPSRNSYGYIIYLPSLKKTVDTTNYVILQDKQSKLDQFNYDTLTFDDDLNRLTAHNQSFIEQNETEQSYDQNTESDHDYQSEIEINSDPLVNDFSSQSINPLQLDKEPVQKVRAPKEVDADISEYNILPSTIRSRTPHIINKESTEMGGTVESDTTSPRHSSTFTARNQNRPGSTNEMIDLTSQDRVNYGLENIKTTRLGGTEEPYIQRNSDTNIKYRTTNSTPSIDDRSSNSESTTPIISIETKAVCDNTPSIDTDPPEYRSSDHATPNIMPDKSSKNVTADSILDDLPLPDLTHKSPTDTSDVSKDIPHIHSRQTNSSLGGMDDSNVLTTTKSKKRSLEDNETEIEVSRDTWNNKNMRSLEPPRSKKRINLIAAIKGVKSIKPVRTTLRYDEAITYNKDNKEKDRYVEAYHKEISQLLKMNTWDTNKYYDRNDIDPKKVINSMFIFNKKRDGTHKARFVARGDIQHPDTYDSDMQSNTVHHYALMTSLSIALDNDYYITQLDISSAYLYADIKEELYIRPPPHLGLNDKLLRLRKSLYGLKQSGANWYETIKSYLINCCDMQEVRGWSCVFKNSQVTICLFVDDMILFSKDLNANKKIITTLKKQYDTKIINLGESDNEIQYDILGLEIKYQRSKYMKLGMEKSLTEKLPKLNVPLNPKGKKLRAPGQPGHYIDQDELEIDEDEYKEKVHEMQKLIGLASYVGYKFRFDLLYYINTLAQHILFPSRQVLDMTYELIQFMWDTRDKQLIWHKNKPTKPDNKLVAISDASYGNQPYYKSQIGNIFLLNGKVIGGKSTKASLTCTSTTEAEIHAVSEAIPLLNNLSHLVQELNKKPIIKGLLTDSRSTISIIKSTNEEKFRNRFFGTKAMRLRDEVSGNNLYVYYIETKKNIADVMTKPLPIKTFKLLTNKWIH</sequence>
<proteinExistence type="inferred from homology"/>
<protein>
    <recommendedName>
        <fullName>Transposon Ty2-GR2 Gag-Pol polyprotein</fullName>
    </recommendedName>
    <alternativeName>
        <fullName>TY2A-TY2B</fullName>
    </alternativeName>
    <alternativeName>
        <fullName>Transposon Ty2 TYA-TYB polyprotein</fullName>
    </alternativeName>
    <component>
        <recommendedName>
            <fullName>Capsid protein</fullName>
            <shortName>CA</shortName>
        </recommendedName>
    </component>
    <component>
        <recommendedName>
            <fullName>Ty2 protease</fullName>
            <shortName>PR</shortName>
            <ecNumber>3.4.23.-</ecNumber>
        </recommendedName>
    </component>
    <component>
        <recommendedName>
            <fullName>Integrase</fullName>
            <shortName>IN</shortName>
        </recommendedName>
    </component>
    <component>
        <recommendedName>
            <fullName>Reverse transcriptase/ribonuclease H</fullName>
            <shortName>RT</shortName>
            <shortName>RT-RH</shortName>
            <ecNumber>2.7.7.49</ecNumber>
            <ecNumber>2.7.7.7</ecNumber>
            <ecNumber>3.1.26.4</ecNumber>
        </recommendedName>
    </component>
</protein>
<organism>
    <name type="scientific">Saccharomyces cerevisiae (strain ATCC 204508 / S288c)</name>
    <name type="common">Baker's yeast</name>
    <dbReference type="NCBI Taxonomy" id="559292"/>
    <lineage>
        <taxon>Eukaryota</taxon>
        <taxon>Fungi</taxon>
        <taxon>Dikarya</taxon>
        <taxon>Ascomycota</taxon>
        <taxon>Saccharomycotina</taxon>
        <taxon>Saccharomycetes</taxon>
        <taxon>Saccharomycetales</taxon>
        <taxon>Saccharomycetaceae</taxon>
        <taxon>Saccharomyces</taxon>
    </lineage>
</organism>
<keyword id="KW-0064">Aspartyl protease</keyword>
<keyword id="KW-0067">ATP-binding</keyword>
<keyword id="KW-0963">Cytoplasm</keyword>
<keyword id="KW-0229">DNA integration</keyword>
<keyword id="KW-0233">DNA recombination</keyword>
<keyword id="KW-0238">DNA-binding</keyword>
<keyword id="KW-0239">DNA-directed DNA polymerase</keyword>
<keyword id="KW-0255">Endonuclease</keyword>
<keyword id="KW-0378">Hydrolase</keyword>
<keyword id="KW-0460">Magnesium</keyword>
<keyword id="KW-0479">Metal-binding</keyword>
<keyword id="KW-0511">Multifunctional enzyme</keyword>
<keyword id="KW-0540">Nuclease</keyword>
<keyword id="KW-0547">Nucleotide-binding</keyword>
<keyword id="KW-0548">Nucleotidyltransferase</keyword>
<keyword id="KW-0539">Nucleus</keyword>
<keyword id="KW-0645">Protease</keyword>
<keyword id="KW-1185">Reference proteome</keyword>
<keyword id="KW-0688">Ribosomal frameshifting</keyword>
<keyword id="KW-0694">RNA-binding</keyword>
<keyword id="KW-0695">RNA-directed DNA polymerase</keyword>
<keyword id="KW-0808">Transferase</keyword>
<keyword id="KW-0814">Transposable element</keyword>
<keyword id="KW-0815">Transposition</keyword>
<keyword id="KW-1188">Viral release from host cell</keyword>
<keyword id="KW-0917">Virion maturation</keyword>
<keyword id="KW-0862">Zinc</keyword>
<keyword id="KW-0863">Zinc-finger</keyword>
<evidence type="ECO:0000250" key="1"/>
<evidence type="ECO:0000255" key="2">
    <source>
        <dbReference type="PROSITE-ProRule" id="PRU00457"/>
    </source>
</evidence>
<evidence type="ECO:0000256" key="3">
    <source>
        <dbReference type="SAM" id="MobiDB-lite"/>
    </source>
</evidence>
<dbReference type="EC" id="3.4.23.-"/>
<dbReference type="EC" id="2.7.7.49"/>
<dbReference type="EC" id="2.7.7.7"/>
<dbReference type="EC" id="3.1.26.4"/>
<dbReference type="EMBL" id="Z72946">
    <property type="protein sequence ID" value="CAA97177.1"/>
    <property type="molecule type" value="Genomic_DNA"/>
</dbReference>
<dbReference type="EMBL" id="Z72947">
    <property type="protein sequence ID" value="CAA97186.1"/>
    <property type="molecule type" value="Genomic_DNA"/>
</dbReference>
<dbReference type="EMBL" id="BK006941">
    <property type="protein sequence ID" value="DAA08253.1"/>
    <property type="molecule type" value="Genomic_DNA"/>
</dbReference>
<dbReference type="PIR" id="S58651">
    <property type="entry name" value="S58651"/>
</dbReference>
<dbReference type="RefSeq" id="NP_058163.1">
    <molecule id="P0CX64-1"/>
    <property type="nucleotide sequence ID" value="NM_001184402.2"/>
</dbReference>
<dbReference type="RefSeq" id="NP_116653.1">
    <molecule id="P0CX64-1"/>
    <property type="nucleotide sequence ID" value="NM_001180862.2"/>
</dbReference>
<dbReference type="BioGRID" id="31146">
    <property type="interactions" value="5"/>
</dbReference>
<dbReference type="BioGRID" id="33410">
    <property type="interactions" value="4"/>
</dbReference>
<dbReference type="FunCoup" id="P0CX64">
    <property type="interactions" value="65"/>
</dbReference>
<dbReference type="MEROPS" id="A11.003"/>
<dbReference type="GeneID" id="853067"/>
<dbReference type="KEGG" id="sce:YFL002W-A"/>
<dbReference type="KEGG" id="sce:YGR161W-B"/>
<dbReference type="AGR" id="SGD:S000007370"/>
<dbReference type="SGD" id="S000007370">
    <property type="gene designation" value="YGR161W-B"/>
</dbReference>
<dbReference type="VEuPathDB" id="FungiDB:YFL002W-A"/>
<dbReference type="VEuPathDB" id="FungiDB:YGR161W-B"/>
<dbReference type="HOGENOM" id="CLU_244151_0_0_1"/>
<dbReference type="InParanoid" id="P0CX64"/>
<dbReference type="OrthoDB" id="4046078at2759"/>
<dbReference type="Proteomes" id="UP000002311">
    <property type="component" value="Chromosome VII"/>
</dbReference>
<dbReference type="RNAct" id="P0CX64">
    <property type="molecule type" value="protein"/>
</dbReference>
<dbReference type="GO" id="GO:0005737">
    <property type="term" value="C:cytoplasm"/>
    <property type="evidence" value="ECO:0007669"/>
    <property type="project" value="UniProtKB-SubCell"/>
</dbReference>
<dbReference type="GO" id="GO:0005634">
    <property type="term" value="C:nucleus"/>
    <property type="evidence" value="ECO:0000314"/>
    <property type="project" value="SGD"/>
</dbReference>
<dbReference type="GO" id="GO:0004190">
    <property type="term" value="F:aspartic-type endopeptidase activity"/>
    <property type="evidence" value="ECO:0007669"/>
    <property type="project" value="UniProtKB-KW"/>
</dbReference>
<dbReference type="GO" id="GO:0005524">
    <property type="term" value="F:ATP binding"/>
    <property type="evidence" value="ECO:0007669"/>
    <property type="project" value="UniProtKB-KW"/>
</dbReference>
<dbReference type="GO" id="GO:0003677">
    <property type="term" value="F:DNA binding"/>
    <property type="evidence" value="ECO:0007669"/>
    <property type="project" value="UniProtKB-KW"/>
</dbReference>
<dbReference type="GO" id="GO:0003887">
    <property type="term" value="F:DNA-directed DNA polymerase activity"/>
    <property type="evidence" value="ECO:0007669"/>
    <property type="project" value="UniProtKB-KW"/>
</dbReference>
<dbReference type="GO" id="GO:0003723">
    <property type="term" value="F:RNA binding"/>
    <property type="evidence" value="ECO:0007669"/>
    <property type="project" value="UniProtKB-KW"/>
</dbReference>
<dbReference type="GO" id="GO:0003964">
    <property type="term" value="F:RNA-directed DNA polymerase activity"/>
    <property type="evidence" value="ECO:0007669"/>
    <property type="project" value="UniProtKB-KW"/>
</dbReference>
<dbReference type="GO" id="GO:0004523">
    <property type="term" value="F:RNA-DNA hybrid ribonuclease activity"/>
    <property type="evidence" value="ECO:0007669"/>
    <property type="project" value="UniProtKB-EC"/>
</dbReference>
<dbReference type="GO" id="GO:0008270">
    <property type="term" value="F:zinc ion binding"/>
    <property type="evidence" value="ECO:0007669"/>
    <property type="project" value="UniProtKB-KW"/>
</dbReference>
<dbReference type="GO" id="GO:0015074">
    <property type="term" value="P:DNA integration"/>
    <property type="evidence" value="ECO:0007669"/>
    <property type="project" value="UniProtKB-KW"/>
</dbReference>
<dbReference type="GO" id="GO:0006310">
    <property type="term" value="P:DNA recombination"/>
    <property type="evidence" value="ECO:0007669"/>
    <property type="project" value="UniProtKB-KW"/>
</dbReference>
<dbReference type="GO" id="GO:0006508">
    <property type="term" value="P:proteolysis"/>
    <property type="evidence" value="ECO:0007669"/>
    <property type="project" value="UniProtKB-KW"/>
</dbReference>
<dbReference type="GO" id="GO:0032196">
    <property type="term" value="P:transposition"/>
    <property type="evidence" value="ECO:0007669"/>
    <property type="project" value="UniProtKB-KW"/>
</dbReference>
<dbReference type="GO" id="GO:0075523">
    <property type="term" value="P:viral translational frameshifting"/>
    <property type="evidence" value="ECO:0007669"/>
    <property type="project" value="UniProtKB-KW"/>
</dbReference>
<dbReference type="CDD" id="cd09272">
    <property type="entry name" value="RNase_HI_RT_Ty1"/>
    <property type="match status" value="1"/>
</dbReference>
<dbReference type="FunFam" id="3.30.420.10:FF:000050">
    <property type="entry name" value="Transposon Ty2-DR3 Gag-Pol polyprotein"/>
    <property type="match status" value="1"/>
</dbReference>
<dbReference type="Gene3D" id="3.30.420.10">
    <property type="entry name" value="Ribonuclease H-like superfamily/Ribonuclease H"/>
    <property type="match status" value="1"/>
</dbReference>
<dbReference type="InterPro" id="IPR043502">
    <property type="entry name" value="DNA/RNA_pol_sf"/>
</dbReference>
<dbReference type="InterPro" id="IPR001584">
    <property type="entry name" value="Integrase_cat-core"/>
</dbReference>
<dbReference type="InterPro" id="IPR054722">
    <property type="entry name" value="PolX-like_BBD"/>
</dbReference>
<dbReference type="InterPro" id="IPR039537">
    <property type="entry name" value="Retrotran_Ty1/copia-like"/>
</dbReference>
<dbReference type="InterPro" id="IPR012337">
    <property type="entry name" value="RNaseH-like_sf"/>
</dbReference>
<dbReference type="InterPro" id="IPR036397">
    <property type="entry name" value="RNaseH_sf"/>
</dbReference>
<dbReference type="InterPro" id="IPR013103">
    <property type="entry name" value="RVT_2"/>
</dbReference>
<dbReference type="InterPro" id="IPR015820">
    <property type="entry name" value="TYA"/>
</dbReference>
<dbReference type="PANTHER" id="PTHR42648">
    <property type="entry name" value="TRANSPOSASE, PUTATIVE-RELATED"/>
    <property type="match status" value="1"/>
</dbReference>
<dbReference type="PANTHER" id="PTHR42648:SF11">
    <property type="entry name" value="TRANSPOSON TY4-P GAG-POL POLYPROTEIN"/>
    <property type="match status" value="1"/>
</dbReference>
<dbReference type="Pfam" id="PF22936">
    <property type="entry name" value="Pol_BBD"/>
    <property type="match status" value="1"/>
</dbReference>
<dbReference type="Pfam" id="PF00665">
    <property type="entry name" value="rve"/>
    <property type="match status" value="1"/>
</dbReference>
<dbReference type="Pfam" id="PF07727">
    <property type="entry name" value="RVT_2"/>
    <property type="match status" value="1"/>
</dbReference>
<dbReference type="Pfam" id="PF01021">
    <property type="entry name" value="TYA"/>
    <property type="match status" value="1"/>
</dbReference>
<dbReference type="SUPFAM" id="SSF56672">
    <property type="entry name" value="DNA/RNA polymerases"/>
    <property type="match status" value="1"/>
</dbReference>
<dbReference type="SUPFAM" id="SSF53098">
    <property type="entry name" value="Ribonuclease H-like"/>
    <property type="match status" value="1"/>
</dbReference>
<dbReference type="PROSITE" id="PS50994">
    <property type="entry name" value="INTEGRASE"/>
    <property type="match status" value="1"/>
</dbReference>
<feature type="chain" id="PRO_0000409809" description="Transposon Ty2-GR2 Gag-Pol polyprotein">
    <location>
        <begin position="1"/>
        <end position="1770"/>
    </location>
</feature>
<feature type="chain" id="PRO_0000409810" description="Capsid protein" evidence="1">
    <location>
        <begin position="1"/>
        <end position="397"/>
    </location>
</feature>
<feature type="chain" id="PRO_0000409811" description="Ty2 protease" evidence="1">
    <location>
        <begin position="398"/>
        <end position="578"/>
    </location>
</feature>
<feature type="chain" id="PRO_0000409812" description="Integrase" evidence="1">
    <location>
        <begin position="579"/>
        <end position="1232"/>
    </location>
</feature>
<feature type="chain" id="PRO_0000409813" description="Reverse transcriptase/ribonuclease H" evidence="1">
    <location>
        <begin position="1233"/>
        <end position="1770"/>
    </location>
</feature>
<feature type="domain" description="Integrase catalytic" evidence="2">
    <location>
        <begin position="656"/>
        <end position="831"/>
    </location>
</feature>
<feature type="domain" description="Reverse transcriptase Ty1/copia-type">
    <location>
        <begin position="1353"/>
        <end position="1491"/>
    </location>
</feature>
<feature type="domain" description="RNase H Ty1/copia-type">
    <location>
        <begin position="1625"/>
        <end position="1767"/>
    </location>
</feature>
<feature type="region of interest" description="Disordered" evidence="3">
    <location>
        <begin position="1"/>
        <end position="86"/>
    </location>
</feature>
<feature type="region of interest" description="RNA-binding" evidence="1">
    <location>
        <begin position="295"/>
        <end position="397"/>
    </location>
</feature>
<feature type="region of interest" description="Disordered" evidence="3">
    <location>
        <begin position="359"/>
        <end position="453"/>
    </location>
</feature>
<feature type="region of interest" description="Integrase-type zinc finger-like">
    <location>
        <begin position="579"/>
        <end position="636"/>
    </location>
</feature>
<feature type="region of interest" description="Disordered" evidence="3">
    <location>
        <begin position="1004"/>
        <end position="1034"/>
    </location>
</feature>
<feature type="region of interest" description="Disordered" evidence="3">
    <location>
        <begin position="1059"/>
        <end position="1135"/>
    </location>
</feature>
<feature type="region of interest" description="Disordered" evidence="3">
    <location>
        <begin position="1146"/>
        <end position="1165"/>
    </location>
</feature>
<feature type="region of interest" description="Disordered" evidence="3">
    <location>
        <begin position="1170"/>
        <end position="1205"/>
    </location>
</feature>
<feature type="short sequence motif" description="Bipartite nuclear localization signal" evidence="1">
    <location>
        <begin position="1193"/>
        <end position="1227"/>
    </location>
</feature>
<feature type="compositionally biased region" description="Polar residues" evidence="3">
    <location>
        <begin position="1"/>
        <end position="11"/>
    </location>
</feature>
<feature type="compositionally biased region" description="Polar residues" evidence="3">
    <location>
        <begin position="19"/>
        <end position="39"/>
    </location>
</feature>
<feature type="compositionally biased region" description="Polar residues" evidence="3">
    <location>
        <begin position="49"/>
        <end position="60"/>
    </location>
</feature>
<feature type="compositionally biased region" description="Low complexity" evidence="3">
    <location>
        <begin position="369"/>
        <end position="381"/>
    </location>
</feature>
<feature type="compositionally biased region" description="Polar residues" evidence="3">
    <location>
        <begin position="399"/>
        <end position="408"/>
    </location>
</feature>
<feature type="compositionally biased region" description="Polar residues" evidence="3">
    <location>
        <begin position="415"/>
        <end position="435"/>
    </location>
</feature>
<feature type="compositionally biased region" description="Polar residues" evidence="3">
    <location>
        <begin position="1009"/>
        <end position="1034"/>
    </location>
</feature>
<feature type="compositionally biased region" description="Polar residues" evidence="3">
    <location>
        <begin position="1065"/>
        <end position="1082"/>
    </location>
</feature>
<feature type="compositionally biased region" description="Basic and acidic residues" evidence="3">
    <location>
        <begin position="1151"/>
        <end position="1165"/>
    </location>
</feature>
<feature type="active site" description="For protease activity; shared with dimeric partner" evidence="1">
    <location>
        <position position="457"/>
    </location>
</feature>
<feature type="binding site" evidence="2">
    <location>
        <position position="667"/>
    </location>
    <ligand>
        <name>Mg(2+)</name>
        <dbReference type="ChEBI" id="CHEBI:18420"/>
        <label>1</label>
        <note>catalytic; for integrase activity</note>
    </ligand>
</feature>
<feature type="binding site" evidence="2">
    <location>
        <position position="732"/>
    </location>
    <ligand>
        <name>Mg(2+)</name>
        <dbReference type="ChEBI" id="CHEBI:18420"/>
        <label>1</label>
        <note>catalytic; for integrase activity</note>
    </ligand>
</feature>
<feature type="binding site" evidence="2">
    <location>
        <position position="1361"/>
    </location>
    <ligand>
        <name>Mg(2+)</name>
        <dbReference type="ChEBI" id="CHEBI:18420"/>
        <label>2</label>
        <note>catalytic; for reverse transcriptase activity</note>
    </ligand>
</feature>
<feature type="binding site" evidence="2">
    <location>
        <position position="1442"/>
    </location>
    <ligand>
        <name>Mg(2+)</name>
        <dbReference type="ChEBI" id="CHEBI:18420"/>
        <label>2</label>
        <note>catalytic; for reverse transcriptase activity</note>
    </ligand>
</feature>
<feature type="binding site" evidence="2">
    <location>
        <position position="1443"/>
    </location>
    <ligand>
        <name>Mg(2+)</name>
        <dbReference type="ChEBI" id="CHEBI:18420"/>
        <label>2</label>
        <note>catalytic; for reverse transcriptase activity</note>
    </ligand>
</feature>
<feature type="binding site" evidence="2">
    <location>
        <position position="1625"/>
    </location>
    <ligand>
        <name>Mg(2+)</name>
        <dbReference type="ChEBI" id="CHEBI:18420"/>
        <label>3</label>
        <note>catalytic; for RNase H activity</note>
    </ligand>
</feature>
<feature type="binding site" evidence="2">
    <location>
        <position position="1667"/>
    </location>
    <ligand>
        <name>Mg(2+)</name>
        <dbReference type="ChEBI" id="CHEBI:18420"/>
        <label>3</label>
        <note>catalytic; for RNase H activity</note>
    </ligand>
</feature>
<feature type="binding site" evidence="2">
    <location>
        <position position="1700"/>
    </location>
    <ligand>
        <name>Mg(2+)</name>
        <dbReference type="ChEBI" id="CHEBI:18420"/>
        <label>3</label>
        <note>catalytic; for RNase H activity</note>
    </ligand>
</feature>
<feature type="site" description="Cleavage; by Ty2 protease" evidence="1">
    <location>
        <begin position="397"/>
        <end position="398"/>
    </location>
</feature>
<feature type="site" description="Cleavage; by Ty2 protease" evidence="1">
    <location>
        <begin position="578"/>
        <end position="579"/>
    </location>
</feature>
<feature type="site" description="Cleavage; by Ty2 protease" evidence="1">
    <location>
        <begin position="1232"/>
        <end position="1233"/>
    </location>
</feature>
<accession>P0CX64</accession>
<accession>D6VTM7</accession>
<accession>Q05369</accession>
<accession>Q12503</accession>
<gene>
    <name type="primary">TY2B-GR2</name>
    <name type="synonym">YGRWTy2-2 POL</name>
    <name type="ordered locus">YGR161W-B</name>
    <name type="ORF">G7017</name>
</gene>
<comment type="function">
    <text evidence="1">Capsid protein (CA) is the structural component of the virus-like particle (VLP), forming the shell that encapsulates the retrotransposons dimeric RNA genome. The particles are assembled from trimer-clustered units and there are holes in the capsid shells that allow for the diffusion of macromolecules. CA also has nucleocapsid-like chaperone activity, promoting primer tRNA(i)-Met annealing to the multipartite primer-binding site (PBS), dimerization of Ty2 RNA and initiation of reverse transcription (By similarity).</text>
</comment>
<comment type="function">
    <text evidence="1">The aspartyl protease (PR) mediates the proteolytic cleavages of the Gag and Gag-Pol polyproteins after assembly of the VLP.</text>
</comment>
<comment type="function">
    <text evidence="1">Reverse transcriptase/ribonuclease H (RT) is a multifunctional enzyme that catalyzes the conversion of the retro-elements RNA genome into dsDNA within the VLP. The enzyme displays a DNA polymerase activity that can copy either DNA or RNA templates, and a ribonuclease H (RNase H) activity that cleaves the RNA strand of RNA-DNA heteroduplexes during plus-strand synthesis and hydrolyzes RNA primers. The conversion leads to a linear dsDNA copy of the retrotransposon that includes long terminal repeats (LTRs) at both ends (By similarity).</text>
</comment>
<comment type="function">
    <text evidence="1">Integrase (IN) targets the VLP to the nucleus, where a subparticle preintegration complex (PIC) containing at least integrase and the newly synthesized dsDNA copy of the retrotransposon must transit the nuclear membrane. Once in the nucleus, integrase performs the integration of the dsDNA into the host genome (By similarity).</text>
</comment>
<comment type="catalytic activity">
    <reaction>
        <text>DNA(n) + a 2'-deoxyribonucleoside 5'-triphosphate = DNA(n+1) + diphosphate</text>
        <dbReference type="Rhea" id="RHEA:22508"/>
        <dbReference type="Rhea" id="RHEA-COMP:17339"/>
        <dbReference type="Rhea" id="RHEA-COMP:17340"/>
        <dbReference type="ChEBI" id="CHEBI:33019"/>
        <dbReference type="ChEBI" id="CHEBI:61560"/>
        <dbReference type="ChEBI" id="CHEBI:173112"/>
        <dbReference type="EC" id="2.7.7.49"/>
    </reaction>
</comment>
<comment type="catalytic activity">
    <reaction>
        <text>DNA(n) + a 2'-deoxyribonucleoside 5'-triphosphate = DNA(n+1) + diphosphate</text>
        <dbReference type="Rhea" id="RHEA:22508"/>
        <dbReference type="Rhea" id="RHEA-COMP:17339"/>
        <dbReference type="Rhea" id="RHEA-COMP:17340"/>
        <dbReference type="ChEBI" id="CHEBI:33019"/>
        <dbReference type="ChEBI" id="CHEBI:61560"/>
        <dbReference type="ChEBI" id="CHEBI:173112"/>
        <dbReference type="EC" id="2.7.7.7"/>
    </reaction>
</comment>
<comment type="catalytic activity">
    <reaction>
        <text>Endonucleolytic cleavage to 5'-phosphomonoester.</text>
        <dbReference type="EC" id="3.1.26.4"/>
    </reaction>
</comment>
<comment type="subunit">
    <text evidence="1">The capsid protein forms a homotrimer, from which the VLPs are assembled. The protease is a homodimer, whose active site consists of two apposed aspartic acid residues (By similarity).</text>
</comment>
<comment type="subcellular location">
    <subcellularLocation>
        <location>Cytoplasm</location>
    </subcellularLocation>
    <subcellularLocation>
        <location evidence="1">Nucleus</location>
    </subcellularLocation>
</comment>
<comment type="alternative products">
    <event type="ribosomal frameshifting"/>
    <isoform>
        <id>P0CX64-1</id>
        <name>Transposon Ty2-GR2 Gag-Pol polyprotein</name>
        <sequence type="displayed"/>
    </isoform>
    <isoform>
        <id>P0CX62-1</id>
        <name>Transposon Ty2-GR2 Gag polyprotein</name>
        <sequence type="external"/>
    </isoform>
    <text>The Gag-Pol polyprotein is generated by a +1 ribosomal frameshift.</text>
</comment>
<comment type="domain">
    <text evidence="1">The C-terminal RNA-binding region of CA is sufficient for all its nucleocapsid-like chaperone activities.</text>
</comment>
<comment type="domain">
    <text evidence="1">Integrase core domain contains the D-x(n)-D-x(35)-E motif, named for the phylogenetically conserved glutamic acid and aspartic acid residues and the invariant 35 amino acid spacing between the second and third acidic residues. Each acidic residue of the D,D(35)E motif is independently essential for the 3'-processing and strand transfer activities of purified integrase protein (By similarity).</text>
</comment>
<comment type="PTM">
    <text evidence="1">Initially, virus-like particles (VLPs) are composed of the structural unprocessed proteins Gag and Gag-Pol, and also contain the host initiator methionine tRNA (tRNA(i)-Met) which serves as a primer for minus-strand DNA synthesis, and a dimer of genomic Ty RNA. Processing of the polyproteins occurs within the particle and proceeds by an ordered pathway, called maturation. First, the protease (PR) is released by autocatalytic cleavage of the Gag-Pol polyprotein, and this cleavage is a prerequisite for subsequent processing at the remaining sites to release the mature structural and catalytic proteins. Maturation takes place prior to the RT reaction and is required to produce transposition-competent VLPs (By similarity).</text>
</comment>
<comment type="miscellaneous">
    <text>Retrotransposons are mobile genetic entities that are able to replicate via an RNA intermediate and a reverse transcription step. In contrast to retroviruses, retrotransposons are non-infectious, lack an envelope and remain intracellular. Ty2 retrotransposons belong to the copia elements (pseudoviridae).</text>
</comment>
<comment type="miscellaneous">
    <molecule>Isoform Transposon Ty2-GR2 Gag-Pol polyprotein</molecule>
    <text>Produced by +1 ribosomal frameshifting between codon Leu-431 and Gly-432 of the YGR161W-A ORF.</text>
</comment>
<name>YG22B_YEAST</name>
<reference key="1">
    <citation type="journal article" date="1997" name="Nature">
        <title>The nucleotide sequence of Saccharomyces cerevisiae chromosome VII.</title>
        <authorList>
            <person name="Tettelin H."/>
            <person name="Agostoni-Carbone M.L."/>
            <person name="Albermann K."/>
            <person name="Albers M."/>
            <person name="Arroyo J."/>
            <person name="Backes U."/>
            <person name="Barreiros T."/>
            <person name="Bertani I."/>
            <person name="Bjourson A.J."/>
            <person name="Brueckner M."/>
            <person name="Bruschi C.V."/>
            <person name="Carignani G."/>
            <person name="Castagnoli L."/>
            <person name="Cerdan E."/>
            <person name="Clemente M.L."/>
            <person name="Coblenz A."/>
            <person name="Coglievina M."/>
            <person name="Coissac E."/>
            <person name="Defoor E."/>
            <person name="Del Bino S."/>
            <person name="Delius H."/>
            <person name="Delneri D."/>
            <person name="de Wergifosse P."/>
            <person name="Dujon B."/>
            <person name="Durand P."/>
            <person name="Entian K.-D."/>
            <person name="Eraso P."/>
            <person name="Escribano V."/>
            <person name="Fabiani L."/>
            <person name="Fartmann B."/>
            <person name="Feroli F."/>
            <person name="Feuermann M."/>
            <person name="Frontali L."/>
            <person name="Garcia-Gonzalez M."/>
            <person name="Garcia-Saez M.I."/>
            <person name="Goffeau A."/>
            <person name="Guerreiro P."/>
            <person name="Hani J."/>
            <person name="Hansen M."/>
            <person name="Hebling U."/>
            <person name="Hernandez K."/>
            <person name="Heumann K."/>
            <person name="Hilger F."/>
            <person name="Hofmann B."/>
            <person name="Indge K.J."/>
            <person name="James C.M."/>
            <person name="Klima R."/>
            <person name="Koetter P."/>
            <person name="Kramer B."/>
            <person name="Kramer W."/>
            <person name="Lauquin G."/>
            <person name="Leuther H."/>
            <person name="Louis E.J."/>
            <person name="Maillier E."/>
            <person name="Marconi A."/>
            <person name="Martegani E."/>
            <person name="Mazon M.J."/>
            <person name="Mazzoni C."/>
            <person name="McReynolds A.D.K."/>
            <person name="Melchioretto P."/>
            <person name="Mewes H.-W."/>
            <person name="Minenkova O."/>
            <person name="Mueller-Auer S."/>
            <person name="Nawrocki A."/>
            <person name="Netter P."/>
            <person name="Neu R."/>
            <person name="Nombela C."/>
            <person name="Oliver S.G."/>
            <person name="Panzeri L."/>
            <person name="Paoluzi S."/>
            <person name="Plevani P."/>
            <person name="Portetelle D."/>
            <person name="Portillo F."/>
            <person name="Potier S."/>
            <person name="Purnelle B."/>
            <person name="Rieger M."/>
            <person name="Riles L."/>
            <person name="Rinaldi T."/>
            <person name="Robben J."/>
            <person name="Rodrigues-Pousada C."/>
            <person name="Rodriguez-Belmonte E."/>
            <person name="Rodriguez-Torres A.M."/>
            <person name="Rose M."/>
            <person name="Ruzzi M."/>
            <person name="Saliola M."/>
            <person name="Sanchez-Perez M."/>
            <person name="Schaefer B."/>
            <person name="Schaefer M."/>
            <person name="Scharfe M."/>
            <person name="Schmidheini T."/>
            <person name="Schreer A."/>
            <person name="Skala J."/>
            <person name="Souciet J.-L."/>
            <person name="Steensma H.Y."/>
            <person name="Talla E."/>
            <person name="Thierry A."/>
            <person name="Vandenbol M."/>
            <person name="van der Aart Q.J.M."/>
            <person name="Van Dyck L."/>
            <person name="Vanoni M."/>
            <person name="Verhasselt P."/>
            <person name="Voet M."/>
            <person name="Volckaert G."/>
            <person name="Wambutt R."/>
            <person name="Watson M.D."/>
            <person name="Weber N."/>
            <person name="Wedler E."/>
            <person name="Wedler H."/>
            <person name="Wipfli P."/>
            <person name="Wolf K."/>
            <person name="Wright L.F."/>
            <person name="Zaccaria P."/>
            <person name="Zimmermann M."/>
            <person name="Zollner A."/>
            <person name="Kleine K."/>
        </authorList>
    </citation>
    <scope>NUCLEOTIDE SEQUENCE [LARGE SCALE GENOMIC DNA]</scope>
    <source>
        <strain>ATCC 204508 / S288c</strain>
    </source>
</reference>
<reference key="2">
    <citation type="journal article" date="2014" name="G3 (Bethesda)">
        <title>The reference genome sequence of Saccharomyces cerevisiae: Then and now.</title>
        <authorList>
            <person name="Engel S.R."/>
            <person name="Dietrich F.S."/>
            <person name="Fisk D.G."/>
            <person name="Binkley G."/>
            <person name="Balakrishnan R."/>
            <person name="Costanzo M.C."/>
            <person name="Dwight S.S."/>
            <person name="Hitz B.C."/>
            <person name="Karra K."/>
            <person name="Nash R.S."/>
            <person name="Weng S."/>
            <person name="Wong E.D."/>
            <person name="Lloyd P."/>
            <person name="Skrzypek M.S."/>
            <person name="Miyasato S.R."/>
            <person name="Simison M."/>
            <person name="Cherry J.M."/>
        </authorList>
    </citation>
    <scope>GENOME REANNOTATION</scope>
    <source>
        <strain>ATCC 204508 / S288c</strain>
    </source>
</reference>
<reference key="3">
    <citation type="journal article" date="1998" name="Genome Res.">
        <title>Transposable elements and genome organization: a comprehensive survey of retrotransposons revealed by the complete Saccharomyces cerevisiae genome sequence.</title>
        <authorList>
            <person name="Kim J.M."/>
            <person name="Vanguri S."/>
            <person name="Boeke J.D."/>
            <person name="Gabriel A."/>
            <person name="Voytas D.F."/>
        </authorList>
    </citation>
    <scope>NOMENCLATURE</scope>
</reference>
<reference key="4">
    <citation type="journal article" date="2005" name="Cytogenet. Genome Res.">
        <title>Happy together: the life and times of Ty retrotransposons and their hosts.</title>
        <authorList>
            <person name="Lesage P."/>
            <person name="Todeschini A.L."/>
        </authorList>
    </citation>
    <scope>REVIEW</scope>
</reference>